<name>RS18_CARHZ</name>
<organism>
    <name type="scientific">Carboxydothermus hydrogenoformans (strain ATCC BAA-161 / DSM 6008 / Z-2901)</name>
    <dbReference type="NCBI Taxonomy" id="246194"/>
    <lineage>
        <taxon>Bacteria</taxon>
        <taxon>Bacillati</taxon>
        <taxon>Bacillota</taxon>
        <taxon>Clostridia</taxon>
        <taxon>Thermoanaerobacterales</taxon>
        <taxon>Thermoanaerobacteraceae</taxon>
        <taxon>Carboxydothermus</taxon>
    </lineage>
</organism>
<reference key="1">
    <citation type="journal article" date="2005" name="PLoS Genet.">
        <title>Life in hot carbon monoxide: the complete genome sequence of Carboxydothermus hydrogenoformans Z-2901.</title>
        <authorList>
            <person name="Wu M."/>
            <person name="Ren Q."/>
            <person name="Durkin A.S."/>
            <person name="Daugherty S.C."/>
            <person name="Brinkac L.M."/>
            <person name="Dodson R.J."/>
            <person name="Madupu R."/>
            <person name="Sullivan S.A."/>
            <person name="Kolonay J.F."/>
            <person name="Nelson W.C."/>
            <person name="Tallon L.J."/>
            <person name="Jones K.M."/>
            <person name="Ulrich L.E."/>
            <person name="Gonzalez J.M."/>
            <person name="Zhulin I.B."/>
            <person name="Robb F.T."/>
            <person name="Eisen J.A."/>
        </authorList>
    </citation>
    <scope>NUCLEOTIDE SEQUENCE [LARGE SCALE GENOMIC DNA]</scope>
    <source>
        <strain>ATCC BAA-161 / DSM 6008 / Z-2901</strain>
    </source>
</reference>
<sequence>MKKEKGSRRKKRVCAFCVDKIVDVDYKDVNRLKKYITERGKILPRRISGNCARHQRRLTTAIKRARIMALLPFTVE</sequence>
<dbReference type="EMBL" id="CP000141">
    <property type="protein sequence ID" value="ABB14306.1"/>
    <property type="molecule type" value="Genomic_DNA"/>
</dbReference>
<dbReference type="RefSeq" id="WP_011342985.1">
    <property type="nucleotide sequence ID" value="NC_007503.1"/>
</dbReference>
<dbReference type="SMR" id="Q3AG25"/>
<dbReference type="FunCoup" id="Q3AG25">
    <property type="interactions" value="423"/>
</dbReference>
<dbReference type="STRING" id="246194.CHY_0037"/>
<dbReference type="KEGG" id="chy:CHY_0037"/>
<dbReference type="eggNOG" id="COG0238">
    <property type="taxonomic scope" value="Bacteria"/>
</dbReference>
<dbReference type="HOGENOM" id="CLU_148710_2_2_9"/>
<dbReference type="InParanoid" id="Q3AG25"/>
<dbReference type="OrthoDB" id="9812008at2"/>
<dbReference type="Proteomes" id="UP000002706">
    <property type="component" value="Chromosome"/>
</dbReference>
<dbReference type="GO" id="GO:0022627">
    <property type="term" value="C:cytosolic small ribosomal subunit"/>
    <property type="evidence" value="ECO:0007669"/>
    <property type="project" value="TreeGrafter"/>
</dbReference>
<dbReference type="GO" id="GO:0070181">
    <property type="term" value="F:small ribosomal subunit rRNA binding"/>
    <property type="evidence" value="ECO:0007669"/>
    <property type="project" value="TreeGrafter"/>
</dbReference>
<dbReference type="GO" id="GO:0003735">
    <property type="term" value="F:structural constituent of ribosome"/>
    <property type="evidence" value="ECO:0007669"/>
    <property type="project" value="InterPro"/>
</dbReference>
<dbReference type="GO" id="GO:0006412">
    <property type="term" value="P:translation"/>
    <property type="evidence" value="ECO:0007669"/>
    <property type="project" value="UniProtKB-UniRule"/>
</dbReference>
<dbReference type="FunFam" id="4.10.640.10:FF:000004">
    <property type="entry name" value="30S ribosomal protein S18"/>
    <property type="match status" value="1"/>
</dbReference>
<dbReference type="Gene3D" id="4.10.640.10">
    <property type="entry name" value="Ribosomal protein S18"/>
    <property type="match status" value="1"/>
</dbReference>
<dbReference type="HAMAP" id="MF_00270">
    <property type="entry name" value="Ribosomal_bS18"/>
    <property type="match status" value="1"/>
</dbReference>
<dbReference type="InterPro" id="IPR001648">
    <property type="entry name" value="Ribosomal_bS18"/>
</dbReference>
<dbReference type="InterPro" id="IPR018275">
    <property type="entry name" value="Ribosomal_bS18_CS"/>
</dbReference>
<dbReference type="InterPro" id="IPR036870">
    <property type="entry name" value="Ribosomal_bS18_sf"/>
</dbReference>
<dbReference type="NCBIfam" id="TIGR00165">
    <property type="entry name" value="S18"/>
    <property type="match status" value="1"/>
</dbReference>
<dbReference type="PANTHER" id="PTHR13479">
    <property type="entry name" value="30S RIBOSOMAL PROTEIN S18"/>
    <property type="match status" value="1"/>
</dbReference>
<dbReference type="PANTHER" id="PTHR13479:SF40">
    <property type="entry name" value="SMALL RIBOSOMAL SUBUNIT PROTEIN BS18M"/>
    <property type="match status" value="1"/>
</dbReference>
<dbReference type="Pfam" id="PF01084">
    <property type="entry name" value="Ribosomal_S18"/>
    <property type="match status" value="1"/>
</dbReference>
<dbReference type="PRINTS" id="PR00974">
    <property type="entry name" value="RIBOSOMALS18"/>
</dbReference>
<dbReference type="SUPFAM" id="SSF46911">
    <property type="entry name" value="Ribosomal protein S18"/>
    <property type="match status" value="1"/>
</dbReference>
<dbReference type="PROSITE" id="PS00057">
    <property type="entry name" value="RIBOSOMAL_S18"/>
    <property type="match status" value="1"/>
</dbReference>
<keyword id="KW-1185">Reference proteome</keyword>
<keyword id="KW-0687">Ribonucleoprotein</keyword>
<keyword id="KW-0689">Ribosomal protein</keyword>
<keyword id="KW-0694">RNA-binding</keyword>
<keyword id="KW-0699">rRNA-binding</keyword>
<protein>
    <recommendedName>
        <fullName evidence="1">Small ribosomal subunit protein bS18</fullName>
    </recommendedName>
    <alternativeName>
        <fullName evidence="2">30S ribosomal protein S18</fullName>
    </alternativeName>
</protein>
<comment type="function">
    <text evidence="1">Binds as a heterodimer with protein bS6 to the central domain of the 16S rRNA, where it helps stabilize the platform of the 30S subunit.</text>
</comment>
<comment type="subunit">
    <text evidence="1">Part of the 30S ribosomal subunit. Forms a tight heterodimer with protein bS6.</text>
</comment>
<comment type="similarity">
    <text evidence="1">Belongs to the bacterial ribosomal protein bS18 family.</text>
</comment>
<gene>
    <name evidence="1" type="primary">rpsR</name>
    <name type="ordered locus">CHY_0037</name>
</gene>
<evidence type="ECO:0000255" key="1">
    <source>
        <dbReference type="HAMAP-Rule" id="MF_00270"/>
    </source>
</evidence>
<evidence type="ECO:0000305" key="2"/>
<accession>Q3AG25</accession>
<feature type="chain" id="PRO_0000345448" description="Small ribosomal subunit protein bS18">
    <location>
        <begin position="1"/>
        <end position="76"/>
    </location>
</feature>
<proteinExistence type="inferred from homology"/>